<feature type="chain" id="PRO_0000344479" description="Sorbin and SH3 domain-containing protein 2">
    <location>
        <begin position="1"/>
        <end position="1196"/>
    </location>
</feature>
<feature type="domain" description="SoHo" evidence="5">
    <location>
        <begin position="166"/>
        <end position="227"/>
    </location>
</feature>
<feature type="domain" description="SH3 1" evidence="4">
    <location>
        <begin position="959"/>
        <end position="1018"/>
    </location>
</feature>
<feature type="domain" description="SH3 2" evidence="4">
    <location>
        <begin position="1034"/>
        <end position="1095"/>
    </location>
</feature>
<feature type="domain" description="SH3 3" evidence="4">
    <location>
        <begin position="1137"/>
        <end position="1196"/>
    </location>
</feature>
<feature type="region of interest" description="Disordered" evidence="6">
    <location>
        <begin position="25"/>
        <end position="57"/>
    </location>
</feature>
<feature type="region of interest" description="Disordered" evidence="6">
    <location>
        <begin position="75"/>
        <end position="95"/>
    </location>
</feature>
<feature type="region of interest" description="Disordered" evidence="6">
    <location>
        <begin position="235"/>
        <end position="314"/>
    </location>
</feature>
<feature type="region of interest" description="Disordered" evidence="6">
    <location>
        <begin position="329"/>
        <end position="407"/>
    </location>
</feature>
<feature type="region of interest" description="Disordered" evidence="6">
    <location>
        <begin position="929"/>
        <end position="958"/>
    </location>
</feature>
<feature type="compositionally biased region" description="Polar residues" evidence="6">
    <location>
        <begin position="83"/>
        <end position="92"/>
    </location>
</feature>
<feature type="compositionally biased region" description="Polar residues" evidence="6">
    <location>
        <begin position="235"/>
        <end position="247"/>
    </location>
</feature>
<feature type="compositionally biased region" description="Basic and acidic residues" evidence="6">
    <location>
        <begin position="252"/>
        <end position="262"/>
    </location>
</feature>
<feature type="compositionally biased region" description="Basic and acidic residues" evidence="6">
    <location>
        <begin position="276"/>
        <end position="312"/>
    </location>
</feature>
<feature type="compositionally biased region" description="Polar residues" evidence="6">
    <location>
        <begin position="329"/>
        <end position="343"/>
    </location>
</feature>
<feature type="compositionally biased region" description="Low complexity" evidence="6">
    <location>
        <begin position="382"/>
        <end position="399"/>
    </location>
</feature>
<feature type="compositionally biased region" description="Basic and acidic residues" evidence="6">
    <location>
        <begin position="948"/>
        <end position="958"/>
    </location>
</feature>
<feature type="modified residue" description="Phosphoserine" evidence="14">
    <location>
        <position position="27"/>
    </location>
</feature>
<feature type="modified residue" description="Phosphoserine" evidence="3">
    <location>
        <position position="28"/>
    </location>
</feature>
<feature type="modified residue" description="Phosphoserine" evidence="14">
    <location>
        <position position="40"/>
    </location>
</feature>
<feature type="modified residue" description="Phosphoserine" evidence="3">
    <location>
        <position position="130"/>
    </location>
</feature>
<feature type="modified residue" description="Phosphoserine" evidence="14">
    <location>
        <position position="143"/>
    </location>
</feature>
<feature type="modified residue" description="Phosphoserine" evidence="14">
    <location>
        <position position="254"/>
    </location>
</feature>
<feature type="modified residue" description="Phosphoserine" evidence="2">
    <location>
        <position position="334"/>
    </location>
</feature>
<feature type="modified residue" description="Phosphoserine" evidence="3">
    <location>
        <position position="340"/>
    </location>
</feature>
<feature type="modified residue" description="Phosphoserine" evidence="14">
    <location>
        <position position="343"/>
    </location>
</feature>
<feature type="modified residue" description="Phosphoserine" evidence="14">
    <location>
        <position position="354"/>
    </location>
</feature>
<feature type="modified residue" description="Phosphothreonine" evidence="2">
    <location>
        <position position="372"/>
    </location>
</feature>
<feature type="modified residue" description="Phosphoserine" evidence="2">
    <location>
        <position position="382"/>
    </location>
</feature>
<feature type="modified residue" description="Phosphothreonine" evidence="2">
    <location>
        <position position="387"/>
    </location>
</feature>
<feature type="modified residue" description="Phosphoserine" evidence="3">
    <location>
        <position position="392"/>
    </location>
</feature>
<feature type="modified residue" description="Phosphoserine" evidence="2">
    <location>
        <position position="393"/>
    </location>
</feature>
<feature type="modified residue" description="Phosphoserine" evidence="2">
    <location>
        <position position="394"/>
    </location>
</feature>
<feature type="modified residue" description="Phosphoserine" evidence="2">
    <location>
        <position position="396"/>
    </location>
</feature>
<feature type="modified residue" description="Phosphoserine" evidence="14">
    <location>
        <position position="397"/>
    </location>
</feature>
<feature type="modified residue" description="Phosphoserine" evidence="2">
    <location>
        <position position="399"/>
    </location>
</feature>
<feature type="modified residue" description="Phosphoserine" evidence="3">
    <location>
        <position position="478"/>
    </location>
</feature>
<feature type="modified residue" description="Phosphoserine" evidence="14">
    <location>
        <position position="589"/>
    </location>
</feature>
<feature type="modified residue" description="Phosphoserine" evidence="3">
    <location>
        <position position="592"/>
    </location>
</feature>
<feature type="modified residue" description="Phosphoserine" evidence="14">
    <location>
        <position position="645"/>
    </location>
</feature>
<feature type="modified residue" description="Phosphoserine" evidence="14">
    <location>
        <position position="648"/>
    </location>
</feature>
<feature type="modified residue" description="Phosphoserine" evidence="14">
    <location>
        <position position="844"/>
    </location>
</feature>
<feature type="modified residue" description="Phosphoserine" evidence="2">
    <location>
        <position position="938"/>
    </location>
</feature>
<feature type="modified residue" description="Phosphoserine" evidence="14">
    <location>
        <position position="1113"/>
    </location>
</feature>
<feature type="modified residue" description="Phosphoserine" evidence="2">
    <location>
        <position position="1119"/>
    </location>
</feature>
<feature type="splice variant" id="VSP_034812" description="In isoform 2." evidence="12">
    <location>
        <begin position="1"/>
        <end position="181"/>
    </location>
</feature>
<feature type="splice variant" id="VSP_034813" description="In isoform 2." evidence="12">
    <original>GIPT</original>
    <variation>MISQ</variation>
    <location>
        <begin position="182"/>
        <end position="185"/>
    </location>
</feature>
<feature type="splice variant" id="VSP_034814" description="In isoform 2." evidence="12">
    <original>VYQSSIDRS</original>
    <variation>KPQAGRRKV</variation>
    <location>
        <begin position="326"/>
        <end position="334"/>
    </location>
</feature>
<feature type="splice variant" id="VSP_034815" description="In isoform 2." evidence="12">
    <location>
        <begin position="335"/>
        <end position="1196"/>
    </location>
</feature>
<feature type="sequence conflict" description="In Ref. 1; AAB81527." evidence="13" ref="1">
    <original>T</original>
    <variation>P</variation>
    <location>
        <position position="265"/>
    </location>
</feature>
<feature type="sequence conflict" description="In Ref. 2; AAK81861." evidence="13" ref="2">
    <original>S</original>
    <variation>V</variation>
    <location>
        <position position="354"/>
    </location>
</feature>
<feature type="modified residue" description="Alanine amide" evidence="8">
    <location sequence="O35413-2">
        <position position="148"/>
    </location>
</feature>
<evidence type="ECO:0000250" key="1"/>
<evidence type="ECO:0000250" key="2">
    <source>
        <dbReference type="UniProtKB" id="O94875"/>
    </source>
</evidence>
<evidence type="ECO:0000250" key="3">
    <source>
        <dbReference type="UniProtKB" id="Q3UTJ2"/>
    </source>
</evidence>
<evidence type="ECO:0000255" key="4">
    <source>
        <dbReference type="PROSITE-ProRule" id="PRU00192"/>
    </source>
</evidence>
<evidence type="ECO:0000255" key="5">
    <source>
        <dbReference type="PROSITE-ProRule" id="PRU00195"/>
    </source>
</evidence>
<evidence type="ECO:0000256" key="6">
    <source>
        <dbReference type="SAM" id="MobiDB-lite"/>
    </source>
</evidence>
<evidence type="ECO:0000269" key="7">
    <source>
    </source>
</evidence>
<evidence type="ECO:0000269" key="8">
    <source>
    </source>
</evidence>
<evidence type="ECO:0000269" key="9">
    <source>
    </source>
</evidence>
<evidence type="ECO:0000269" key="10">
    <source>
    </source>
</evidence>
<evidence type="ECO:0000269" key="11">
    <source>
    </source>
</evidence>
<evidence type="ECO:0000303" key="12">
    <source>
    </source>
</evidence>
<evidence type="ECO:0000305" key="13"/>
<evidence type="ECO:0007744" key="14">
    <source>
    </source>
</evidence>
<organism>
    <name type="scientific">Rattus norvegicus</name>
    <name type="common">Rat</name>
    <dbReference type="NCBI Taxonomy" id="10116"/>
    <lineage>
        <taxon>Eukaryota</taxon>
        <taxon>Metazoa</taxon>
        <taxon>Chordata</taxon>
        <taxon>Craniata</taxon>
        <taxon>Vertebrata</taxon>
        <taxon>Euteleostomi</taxon>
        <taxon>Mammalia</taxon>
        <taxon>Eutheria</taxon>
        <taxon>Euarchontoglires</taxon>
        <taxon>Glires</taxon>
        <taxon>Rodentia</taxon>
        <taxon>Myomorpha</taxon>
        <taxon>Muroidea</taxon>
        <taxon>Muridae</taxon>
        <taxon>Murinae</taxon>
        <taxon>Rattus</taxon>
    </lineage>
</organism>
<name>SRBS2_RAT</name>
<keyword id="KW-0025">Alternative splicing</keyword>
<keyword id="KW-0027">Amidation</keyword>
<keyword id="KW-0965">Cell junction</keyword>
<keyword id="KW-1003">Cell membrane</keyword>
<keyword id="KW-0966">Cell projection</keyword>
<keyword id="KW-0963">Cytoplasm</keyword>
<keyword id="KW-0472">Membrane</keyword>
<keyword id="KW-0597">Phosphoprotein</keyword>
<keyword id="KW-1185">Reference proteome</keyword>
<keyword id="KW-0677">Repeat</keyword>
<keyword id="KW-0728">SH3 domain</keyword>
<keyword id="KW-0832">Ubl conjugation</keyword>
<proteinExistence type="evidence at protein level"/>
<dbReference type="EMBL" id="AF026505">
    <property type="protein sequence ID" value="AAB81527.1"/>
    <property type="molecule type" value="mRNA"/>
</dbReference>
<dbReference type="EMBL" id="AF396458">
    <property type="protein sequence ID" value="AAK81861.1"/>
    <property type="molecule type" value="mRNA"/>
</dbReference>
<dbReference type="PIR" id="T14108">
    <property type="entry name" value="T14108"/>
</dbReference>
<dbReference type="RefSeq" id="NP_446222.1">
    <property type="nucleotide sequence ID" value="NM_053770.1"/>
</dbReference>
<dbReference type="SMR" id="O35413"/>
<dbReference type="BioGRID" id="250427">
    <property type="interactions" value="9"/>
</dbReference>
<dbReference type="FunCoup" id="O35413">
    <property type="interactions" value="452"/>
</dbReference>
<dbReference type="IntAct" id="O35413">
    <property type="interactions" value="3"/>
</dbReference>
<dbReference type="MINT" id="O35413"/>
<dbReference type="STRING" id="10116.ENSRNOP00000029182"/>
<dbReference type="iPTMnet" id="O35413"/>
<dbReference type="PhosphoSitePlus" id="O35413"/>
<dbReference type="PaxDb" id="10116-ENSRNOP00000029182"/>
<dbReference type="GeneID" id="114901"/>
<dbReference type="KEGG" id="rno:114901"/>
<dbReference type="AGR" id="RGD:620061"/>
<dbReference type="CTD" id="8470"/>
<dbReference type="RGD" id="620061">
    <property type="gene designation" value="Sorbs2"/>
</dbReference>
<dbReference type="eggNOG" id="KOG4225">
    <property type="taxonomic scope" value="Eukaryota"/>
</dbReference>
<dbReference type="InParanoid" id="O35413"/>
<dbReference type="PhylomeDB" id="O35413"/>
<dbReference type="Reactome" id="R-RNO-264870">
    <property type="pathway name" value="Caspase-mediated cleavage of cytoskeletal proteins"/>
</dbReference>
<dbReference type="Reactome" id="R-RNO-6794361">
    <property type="pathway name" value="Neurexins and neuroligins"/>
</dbReference>
<dbReference type="Reactome" id="R-RNO-6798695">
    <property type="pathway name" value="Neutrophil degranulation"/>
</dbReference>
<dbReference type="PRO" id="PR:O35413"/>
<dbReference type="Proteomes" id="UP000002494">
    <property type="component" value="Unplaced"/>
</dbReference>
<dbReference type="GO" id="GO:0016324">
    <property type="term" value="C:apical plasma membrane"/>
    <property type="evidence" value="ECO:0007669"/>
    <property type="project" value="UniProtKB-SubCell"/>
</dbReference>
<dbReference type="GO" id="GO:0030425">
    <property type="term" value="C:dendrite"/>
    <property type="evidence" value="ECO:0000314"/>
    <property type="project" value="RGD"/>
</dbReference>
<dbReference type="GO" id="GO:0005925">
    <property type="term" value="C:focal adhesion"/>
    <property type="evidence" value="ECO:0007669"/>
    <property type="project" value="UniProtKB-SubCell"/>
</dbReference>
<dbReference type="GO" id="GO:0030027">
    <property type="term" value="C:lamellipodium"/>
    <property type="evidence" value="ECO:0007669"/>
    <property type="project" value="UniProtKB-SubCell"/>
</dbReference>
<dbReference type="GO" id="GO:0043025">
    <property type="term" value="C:neuronal cell body"/>
    <property type="evidence" value="ECO:0000314"/>
    <property type="project" value="RGD"/>
</dbReference>
<dbReference type="GO" id="GO:0048471">
    <property type="term" value="C:perinuclear region of cytoplasm"/>
    <property type="evidence" value="ECO:0007669"/>
    <property type="project" value="UniProtKB-SubCell"/>
</dbReference>
<dbReference type="GO" id="GO:0005886">
    <property type="term" value="C:plasma membrane"/>
    <property type="evidence" value="ECO:0000266"/>
    <property type="project" value="RGD"/>
</dbReference>
<dbReference type="GO" id="GO:0045202">
    <property type="term" value="C:synapse"/>
    <property type="evidence" value="ECO:0000266"/>
    <property type="project" value="RGD"/>
</dbReference>
<dbReference type="GO" id="GO:0019904">
    <property type="term" value="F:protein domain specific binding"/>
    <property type="evidence" value="ECO:0000266"/>
    <property type="project" value="RGD"/>
</dbReference>
<dbReference type="GO" id="GO:0095500">
    <property type="term" value="P:acetylcholine receptor signaling pathway"/>
    <property type="evidence" value="ECO:0000266"/>
    <property type="project" value="RGD"/>
</dbReference>
<dbReference type="GO" id="GO:0061049">
    <property type="term" value="P:cell growth involved in cardiac muscle cell development"/>
    <property type="evidence" value="ECO:0000316"/>
    <property type="project" value="BHF-UCL"/>
</dbReference>
<dbReference type="GO" id="GO:0007219">
    <property type="term" value="P:Notch signaling pathway"/>
    <property type="evidence" value="ECO:0000266"/>
    <property type="project" value="RGD"/>
</dbReference>
<dbReference type="GO" id="GO:1904393">
    <property type="term" value="P:regulation of skeletal muscle acetylcholine-gated channel clustering"/>
    <property type="evidence" value="ECO:0000266"/>
    <property type="project" value="RGD"/>
</dbReference>
<dbReference type="CDD" id="cd11920">
    <property type="entry name" value="SH3_Sorbs2_1"/>
    <property type="match status" value="1"/>
</dbReference>
<dbReference type="CDD" id="cd11923">
    <property type="entry name" value="SH3_Sorbs2_2"/>
    <property type="match status" value="1"/>
</dbReference>
<dbReference type="CDD" id="cd11917">
    <property type="entry name" value="SH3_Sorbs2_3"/>
    <property type="match status" value="1"/>
</dbReference>
<dbReference type="FunFam" id="2.30.30.40:FF:000001">
    <property type="entry name" value="Sorbin and SH3 domain-containing protein 1 isoform 2"/>
    <property type="match status" value="1"/>
</dbReference>
<dbReference type="FunFam" id="2.30.30.40:FF:000003">
    <property type="entry name" value="Sorbin and SH3 domain-containing protein 1 isoform 2"/>
    <property type="match status" value="1"/>
</dbReference>
<dbReference type="FunFam" id="2.30.30.40:FF:000004">
    <property type="entry name" value="Sorbin and SH3 domain-containing protein 1 isoform 2"/>
    <property type="match status" value="1"/>
</dbReference>
<dbReference type="Gene3D" id="2.30.30.40">
    <property type="entry name" value="SH3 Domains"/>
    <property type="match status" value="3"/>
</dbReference>
<dbReference type="InterPro" id="IPR050384">
    <property type="entry name" value="Endophilin_SH3RF"/>
</dbReference>
<dbReference type="InterPro" id="IPR036028">
    <property type="entry name" value="SH3-like_dom_sf"/>
</dbReference>
<dbReference type="InterPro" id="IPR001452">
    <property type="entry name" value="SH3_domain"/>
</dbReference>
<dbReference type="InterPro" id="IPR003127">
    <property type="entry name" value="SoHo_dom"/>
</dbReference>
<dbReference type="InterPro" id="IPR013087">
    <property type="entry name" value="Znf_C2H2_type"/>
</dbReference>
<dbReference type="PANTHER" id="PTHR14167">
    <property type="entry name" value="SH3 DOMAIN-CONTAINING"/>
    <property type="match status" value="1"/>
</dbReference>
<dbReference type="PANTHER" id="PTHR14167:SF56">
    <property type="entry name" value="SORBIN AND SH3 DOMAIN-CONTAINING PROTEIN 2"/>
    <property type="match status" value="1"/>
</dbReference>
<dbReference type="Pfam" id="PF00018">
    <property type="entry name" value="SH3_1"/>
    <property type="match status" value="2"/>
</dbReference>
<dbReference type="Pfam" id="PF14604">
    <property type="entry name" value="SH3_9"/>
    <property type="match status" value="1"/>
</dbReference>
<dbReference type="Pfam" id="PF02208">
    <property type="entry name" value="Sorb"/>
    <property type="match status" value="1"/>
</dbReference>
<dbReference type="PRINTS" id="PR00499">
    <property type="entry name" value="P67PHOX"/>
</dbReference>
<dbReference type="PRINTS" id="PR00452">
    <property type="entry name" value="SH3DOMAIN"/>
</dbReference>
<dbReference type="SMART" id="SM00326">
    <property type="entry name" value="SH3"/>
    <property type="match status" value="3"/>
</dbReference>
<dbReference type="SMART" id="SM00459">
    <property type="entry name" value="Sorb"/>
    <property type="match status" value="1"/>
</dbReference>
<dbReference type="SUPFAM" id="SSF50044">
    <property type="entry name" value="SH3-domain"/>
    <property type="match status" value="3"/>
</dbReference>
<dbReference type="PROSITE" id="PS50002">
    <property type="entry name" value="SH3"/>
    <property type="match status" value="3"/>
</dbReference>
<dbReference type="PROSITE" id="PS50831">
    <property type="entry name" value="SOHO"/>
    <property type="match status" value="1"/>
</dbReference>
<protein>
    <recommendedName>
        <fullName>Sorbin and SH3 domain-containing protein 2</fullName>
    </recommendedName>
    <alternativeName>
        <fullName>Arg-binding protein 2</fullName>
        <shortName>ArgBP2</shortName>
    </alternativeName>
    <alternativeName>
        <fullName>Arg/Abl-interacting protein 2</fullName>
    </alternativeName>
    <alternativeName>
        <fullName>Neural ArgBP2</fullName>
        <shortName>nArgBP2</shortName>
    </alternativeName>
    <alternativeName>
        <fullName>Sorbin</fullName>
    </alternativeName>
</protein>
<gene>
    <name type="primary">Sorbs2</name>
    <name type="synonym">Argbp2</name>
</gene>
<comment type="function">
    <text evidence="1 2 7">Adapter protein that plays a role in the assembling of signaling complexes, being a link between ABL kinases and actin cytoskeleton. Can form complex with ABL1 and CBL, thus promoting ubiquitination and degradation of ABL1 (By similarity). May play a role in the regulation of pancreatic cell adhesion, possibly by acting on WASF1 phosphorylation, enhancing phosphorylation by ABL1, as well as dephosphorylation by PTPN12 (By similarity). Isoform 2 increases water and sodium absorption in the intestine and gall-bladder.</text>
</comment>
<comment type="subunit">
    <text evidence="1 2 7 9 10">Interacts with ABL1/c-Abl, ABL2/v-Abl/Arg, ACTN, CBL and PALLD (By similarity). Interacts with ABL, CBL, DNM1, DNM2, FLOT1, AFDN, PTK2B/PYK2, SAPAP, SPTAN1, SYNJ1, SYNJ2, VCL/vinculin and WASF. Interacts with PTPN12 and WASF1 via its SH3 domains; this interaction may mediate the partial PTPN12 and WASF1 translocation to focal adhesion sites.</text>
</comment>
<comment type="subcellular location">
    <subcellularLocation>
        <location evidence="7 9 10 11">Cytoplasm</location>
        <location evidence="7 9 10 11">Perinuclear region</location>
    </subcellularLocation>
    <subcellularLocation>
        <location evidence="2">Apical cell membrane</location>
    </subcellularLocation>
    <subcellularLocation>
        <location evidence="2">Cell junction</location>
        <location evidence="2">Focal adhesion</location>
    </subcellularLocation>
    <subcellularLocation>
        <location evidence="2">Cell projection</location>
        <location evidence="2">Lamellipodium</location>
    </subcellularLocation>
    <text evidence="2">Detected in the stress fibers, synaptosomal cytosol, postsynaptic density fraction, Z-disks and intercalated. The CBL/PTK2B/ARGBP2 complex is recruited to lipid rafts following growth factor stimulation. In pancreatic acinar cells, localized preferentially to the apical membrane. Colocalized with vinculin and filamentous actin at focal adhesions and lamellipodia of pancreatic cells.</text>
</comment>
<comment type="alternative products">
    <event type="alternative splicing"/>
    <isoform>
        <id>O35413-1</id>
        <name>1</name>
        <sequence type="displayed"/>
    </isoform>
    <isoform>
        <id>O35413-2</id>
        <name>2</name>
        <name>Sorbin</name>
        <sequence type="described" ref="VSP_034812 VSP_034813 VSP_034814 VSP_034815"/>
    </isoform>
</comment>
<comment type="tissue specificity">
    <text evidence="7 10">Expressed in brain; found in synapses in cerebellum.</text>
</comment>
<comment type="domain">
    <text evidence="2">The first 2 SH3 domains are required for WASF1-binding. All 3 SH3 domains can bind independently to PTPN12.</text>
</comment>
<comment type="PTM">
    <text evidence="1">Ubiquitinated by CBL.</text>
</comment>
<sequence>MNTDSGGCARKRAAMSVTLTSVKRVQSSPNLLAAGRESHSPDSAWRSYNGRNPETLNGDATYSSLAAKGFRSVRPNLQDKKSPTQSHITINGNSGGAVSPVSYYQRPFSPSAYSLPASLNSSIIMPHGRSLDSAETYSQHAQSLDGTMGSSIPLYRSSEEEKRVTVIKAPHYPGIGPVDESGIPTAIRTTVDRPKDWYKTMFKQIHMVHKPDEDTDMYNTPYTYNAGLYNSPYSAQSHPAAKTQTYRPLSKSHSDNGTDAFKEATSPVPPPHVPPRPRDQSSTEKHDWDPPDRKVDTRKFRSEPRSIFEYEPGKSSILQHERPVSVYQSSIDRSLERPSSSASMAGDFRKRRKSEPAVGPPRGLGDHSSSRTSPGRADLPGSSSTFTTSFISSSPSSPSRAQGGDDSKMCPPLCSYSGLNGSPSSELECCGAYRRHLDVPQDSQRAITFKNGWQMARQNAEIWSSTEEAVSPKIKSRSCDDLLNDDCGSFPDPKTKSESMGSLLCDEGSKESDPMTWTSPYIPEVCGNSRSRLKHRSAHNAPGFLKMYKKMHRINRKDLMNSEVICSVKSRILQYEKEQQHRGLLHGWSQSSTEEVPRDVVPTRISEFEKLIQKSKSMPNLGDEMLSPVTLEPPQNGLCPKRRFSIESLLEEETQVRHPSQGQRSCKSNTLVPIHIEVTSDEQPRTHMEFSDSDQDGVVSDHSDNVHVERSSFCSESDFDHFSFTSSESFYGSSHHHHHHHHHHGHFISSCKGRCPASYTRFTTMLKHERAKHENIDRPRRQDMDPGLSKLAFLVSPVPFRRKKVLTPQKQTEQAKCKASVVEALDSALKDICDQIKAEKRRGSLPDNSILHRLISELLPQIPKRNSSLNALKRSPMHQPFHPLPQDGAIHCPLYQNDCGRMPHSASFPDVDTTSSYHAQDYGSVLSLQDHESPRSYSSTLTDLGRSVSRERRGTPEKEVKLPAKAVYDFKAQTSKELSFKKGDTVYILRKIDQNWYEGEHHGRVGIFPISYVEKLTPPEKAQPARPPPPVQPGEIGEAIAKYNFNADTNVELSLRKGDRIILLKRVDQNWYEGKIPGTNRQGIFPVSYVEVVKRNTKGSEDYPDPPLPHSYSSDRIYSLSSNKPQRPVFSHENIQGGGEPFQALYNYTPRNEDELELRESDVVDVMEKCDDGWFVGTSRRTKFFGTFPGNYVKRL</sequence>
<reference key="1">
    <citation type="journal article" date="1999" name="J. Biol. Chem.">
        <title>nArgBP2, a novel neural member of ponsin/ArgBP2/vinexin family that interacts with synapse-associated protein 90/postsynaptic density-95-associated protein (SAPAP).</title>
        <authorList>
            <person name="Kawabe H."/>
            <person name="Hata Y."/>
            <person name="Takeuchi M."/>
            <person name="Ide N."/>
            <person name="Mizoguchi A."/>
            <person name="Takai Y."/>
        </authorList>
    </citation>
    <scope>NUCLEOTIDE SEQUENCE [MRNA] (ISOFORM 1)</scope>
    <scope>INTERACTION WITH SAPAP; VCL AND AFDN</scope>
    <scope>TISSUE SPECIFICITY</scope>
    <scope>SUBCELLULAR LOCATION</scope>
    <scope>FUNCTION</scope>
    <source>
        <tissue>Brain</tissue>
    </source>
</reference>
<reference key="2">
    <citation type="journal article" date="2001" name="Peptides">
        <title>Coding region of the sorbin gene in different species.</title>
        <authorList>
            <person name="Wahbi K."/>
            <person name="Magaud J.-P."/>
            <person name="Pansu D."/>
            <person name="Descroix-Vagne M."/>
        </authorList>
    </citation>
    <scope>NUCLEOTIDE SEQUENCE [MRNA] OF 182-354 (ISOFORM 2)</scope>
    <scope>AMIDATION AT ALA-148 (ISOFORM 2)</scope>
    <source>
        <strain>Wistar</strain>
    </source>
</reference>
<reference key="3">
    <citation type="journal article" date="2004" name="J. Cell Sci.">
        <title>Recruitment of Pyk2 and Cbl to lipid rafts mediates signals important for actin reorganization in growing neurites.</title>
        <authorList>
            <person name="Haglund K."/>
            <person name="Ivankovic-Dikic I."/>
            <person name="Shimokawa N."/>
            <person name="Kruh G.D."/>
            <person name="Dikic I."/>
        </authorList>
    </citation>
    <scope>INTERACTION WITH FLOT1; PTK2B AND CBL</scope>
    <scope>SUBCELLULAR LOCATION</scope>
</reference>
<reference key="4">
    <citation type="journal article" date="2005" name="Exp. Cell Res.">
        <title>Involvement of palladin and alpha-actinin in targeting of the Abl/Arg kinase adaptor ArgBP2 to the actin cytoskeleton.</title>
        <authorList>
            <person name="Roenty M."/>
            <person name="Taivainen A."/>
            <person name="Moza M."/>
            <person name="Kruh G.D."/>
            <person name="Ehler E."/>
            <person name="Carpen O."/>
        </authorList>
    </citation>
    <scope>SUBCELLULAR LOCATION</scope>
</reference>
<reference key="5">
    <citation type="journal article" date="2005" name="Proc. Natl. Acad. Sci. U.S.A.">
        <title>The Abl/Arg substrate ArgBP2/nArgBP2 coordinates the function of multiple regulatory mechanisms converging on the actin cytoskeleton.</title>
        <authorList>
            <person name="Cestra G."/>
            <person name="Toomre D."/>
            <person name="Chang S."/>
            <person name="De Camilli P."/>
        </authorList>
    </citation>
    <scope>TISSUE SPECIFICITY</scope>
    <scope>SUBCELLULAR LOCATION</scope>
    <scope>INTERACTION WITH SYNJ1; SYNJ2; DNM1; DNM2; VCL; WASF; CBL; ABL; SPTAN1 AND PTK2B</scope>
</reference>
<reference key="6">
    <citation type="journal article" date="2012" name="Nat. Commun.">
        <title>Quantitative maps of protein phosphorylation sites across 14 different rat organs and tissues.</title>
        <authorList>
            <person name="Lundby A."/>
            <person name="Secher A."/>
            <person name="Lage K."/>
            <person name="Nordsborg N.B."/>
            <person name="Dmytriyev A."/>
            <person name="Lundby C."/>
            <person name="Olsen J.V."/>
        </authorList>
    </citation>
    <scope>PHOSPHORYLATION [LARGE SCALE ANALYSIS] AT SER-27; SER-40; SER-143; SER-254; SER-343; SER-354; SER-397; SER-589; SER-645; SER-648; SER-844 AND SER-1113</scope>
    <scope>IDENTIFICATION BY MASS SPECTROMETRY [LARGE SCALE ANALYSIS]</scope>
</reference>
<accession>O35413</accession>
<accession>Q923T8</accession>